<evidence type="ECO:0000255" key="1">
    <source>
        <dbReference type="HAMAP-Rule" id="MF_00191"/>
    </source>
</evidence>
<accession>B0V8K4</accession>
<protein>
    <recommendedName>
        <fullName evidence="1">4-hydroxy-3-methylbut-2-enyl diphosphate reductase</fullName>
        <shortName evidence="1">HMBPP reductase</shortName>
        <ecNumber evidence="1">1.17.7.4</ecNumber>
    </recommendedName>
</protein>
<gene>
    <name evidence="1" type="primary">ispH</name>
    <name type="ordered locus">ABAYE0313</name>
</gene>
<proteinExistence type="inferred from homology"/>
<dbReference type="EC" id="1.17.7.4" evidence="1"/>
<dbReference type="EMBL" id="CU459141">
    <property type="protein sequence ID" value="CAM85291.1"/>
    <property type="molecule type" value="Genomic_DNA"/>
</dbReference>
<dbReference type="RefSeq" id="WP_000407064.1">
    <property type="nucleotide sequence ID" value="NZ_JBDGFB010000011.1"/>
</dbReference>
<dbReference type="SMR" id="B0V8K4"/>
<dbReference type="EnsemblBacteria" id="CAM85291">
    <property type="protein sequence ID" value="CAM85291"/>
    <property type="gene ID" value="ABAYE0313"/>
</dbReference>
<dbReference type="GeneID" id="92895407"/>
<dbReference type="KEGG" id="aby:ABAYE0313"/>
<dbReference type="HOGENOM" id="CLU_027486_1_0_6"/>
<dbReference type="UniPathway" id="UPA00056">
    <property type="reaction ID" value="UER00097"/>
</dbReference>
<dbReference type="UniPathway" id="UPA00059">
    <property type="reaction ID" value="UER00105"/>
</dbReference>
<dbReference type="GO" id="GO:0051539">
    <property type="term" value="F:4 iron, 4 sulfur cluster binding"/>
    <property type="evidence" value="ECO:0007669"/>
    <property type="project" value="UniProtKB-UniRule"/>
</dbReference>
<dbReference type="GO" id="GO:0051745">
    <property type="term" value="F:4-hydroxy-3-methylbut-2-enyl diphosphate reductase activity"/>
    <property type="evidence" value="ECO:0007669"/>
    <property type="project" value="UniProtKB-UniRule"/>
</dbReference>
<dbReference type="GO" id="GO:0046872">
    <property type="term" value="F:metal ion binding"/>
    <property type="evidence" value="ECO:0007669"/>
    <property type="project" value="UniProtKB-KW"/>
</dbReference>
<dbReference type="GO" id="GO:0050992">
    <property type="term" value="P:dimethylallyl diphosphate biosynthetic process"/>
    <property type="evidence" value="ECO:0007669"/>
    <property type="project" value="UniProtKB-UniRule"/>
</dbReference>
<dbReference type="GO" id="GO:0019288">
    <property type="term" value="P:isopentenyl diphosphate biosynthetic process, methylerythritol 4-phosphate pathway"/>
    <property type="evidence" value="ECO:0007669"/>
    <property type="project" value="UniProtKB-UniRule"/>
</dbReference>
<dbReference type="GO" id="GO:0016114">
    <property type="term" value="P:terpenoid biosynthetic process"/>
    <property type="evidence" value="ECO:0007669"/>
    <property type="project" value="UniProtKB-UniRule"/>
</dbReference>
<dbReference type="CDD" id="cd13944">
    <property type="entry name" value="lytB_ispH"/>
    <property type="match status" value="1"/>
</dbReference>
<dbReference type="Gene3D" id="3.40.50.11270">
    <property type="match status" value="1"/>
</dbReference>
<dbReference type="Gene3D" id="3.40.1010.20">
    <property type="entry name" value="4-hydroxy-3-methylbut-2-enyl diphosphate reductase, catalytic domain"/>
    <property type="match status" value="2"/>
</dbReference>
<dbReference type="HAMAP" id="MF_00191">
    <property type="entry name" value="IspH"/>
    <property type="match status" value="1"/>
</dbReference>
<dbReference type="InterPro" id="IPR003451">
    <property type="entry name" value="LytB/IspH"/>
</dbReference>
<dbReference type="NCBIfam" id="TIGR00216">
    <property type="entry name" value="ispH_lytB"/>
    <property type="match status" value="1"/>
</dbReference>
<dbReference type="NCBIfam" id="NF002188">
    <property type="entry name" value="PRK01045.1-2"/>
    <property type="match status" value="1"/>
</dbReference>
<dbReference type="NCBIfam" id="NF002190">
    <property type="entry name" value="PRK01045.1-4"/>
    <property type="match status" value="1"/>
</dbReference>
<dbReference type="PANTHER" id="PTHR30426">
    <property type="entry name" value="4-HYDROXY-3-METHYLBUT-2-ENYL DIPHOSPHATE REDUCTASE"/>
    <property type="match status" value="1"/>
</dbReference>
<dbReference type="PANTHER" id="PTHR30426:SF0">
    <property type="entry name" value="4-HYDROXY-3-METHYLBUT-2-ENYL DIPHOSPHATE REDUCTASE"/>
    <property type="match status" value="1"/>
</dbReference>
<dbReference type="Pfam" id="PF02401">
    <property type="entry name" value="LYTB"/>
    <property type="match status" value="1"/>
</dbReference>
<organism>
    <name type="scientific">Acinetobacter baumannii (strain AYE)</name>
    <dbReference type="NCBI Taxonomy" id="509173"/>
    <lineage>
        <taxon>Bacteria</taxon>
        <taxon>Pseudomonadati</taxon>
        <taxon>Pseudomonadota</taxon>
        <taxon>Gammaproteobacteria</taxon>
        <taxon>Moraxellales</taxon>
        <taxon>Moraxellaceae</taxon>
        <taxon>Acinetobacter</taxon>
        <taxon>Acinetobacter calcoaceticus/baumannii complex</taxon>
    </lineage>
</organism>
<comment type="function">
    <text evidence="1">Catalyzes the conversion of 1-hydroxy-2-methyl-2-(E)-butenyl 4-diphosphate (HMBPP) into a mixture of isopentenyl diphosphate (IPP) and dimethylallyl diphosphate (DMAPP). Acts in the terminal step of the DOXP/MEP pathway for isoprenoid precursor biosynthesis.</text>
</comment>
<comment type="catalytic activity">
    <reaction evidence="1">
        <text>isopentenyl diphosphate + 2 oxidized [2Fe-2S]-[ferredoxin] + H2O = (2E)-4-hydroxy-3-methylbut-2-enyl diphosphate + 2 reduced [2Fe-2S]-[ferredoxin] + 2 H(+)</text>
        <dbReference type="Rhea" id="RHEA:24488"/>
        <dbReference type="Rhea" id="RHEA-COMP:10000"/>
        <dbReference type="Rhea" id="RHEA-COMP:10001"/>
        <dbReference type="ChEBI" id="CHEBI:15377"/>
        <dbReference type="ChEBI" id="CHEBI:15378"/>
        <dbReference type="ChEBI" id="CHEBI:33737"/>
        <dbReference type="ChEBI" id="CHEBI:33738"/>
        <dbReference type="ChEBI" id="CHEBI:128753"/>
        <dbReference type="ChEBI" id="CHEBI:128769"/>
        <dbReference type="EC" id="1.17.7.4"/>
    </reaction>
</comment>
<comment type="catalytic activity">
    <reaction evidence="1">
        <text>dimethylallyl diphosphate + 2 oxidized [2Fe-2S]-[ferredoxin] + H2O = (2E)-4-hydroxy-3-methylbut-2-enyl diphosphate + 2 reduced [2Fe-2S]-[ferredoxin] + 2 H(+)</text>
        <dbReference type="Rhea" id="RHEA:24825"/>
        <dbReference type="Rhea" id="RHEA-COMP:10000"/>
        <dbReference type="Rhea" id="RHEA-COMP:10001"/>
        <dbReference type="ChEBI" id="CHEBI:15377"/>
        <dbReference type="ChEBI" id="CHEBI:15378"/>
        <dbReference type="ChEBI" id="CHEBI:33737"/>
        <dbReference type="ChEBI" id="CHEBI:33738"/>
        <dbReference type="ChEBI" id="CHEBI:57623"/>
        <dbReference type="ChEBI" id="CHEBI:128753"/>
        <dbReference type="EC" id="1.17.7.4"/>
    </reaction>
</comment>
<comment type="cofactor">
    <cofactor evidence="1">
        <name>[4Fe-4S] cluster</name>
        <dbReference type="ChEBI" id="CHEBI:49883"/>
    </cofactor>
    <text evidence="1">Binds 1 [4Fe-4S] cluster per subunit.</text>
</comment>
<comment type="pathway">
    <text evidence="1">Isoprenoid biosynthesis; dimethylallyl diphosphate biosynthesis; dimethylallyl diphosphate from (2E)-4-hydroxy-3-methylbutenyl diphosphate: step 1/1.</text>
</comment>
<comment type="pathway">
    <text evidence="1">Isoprenoid biosynthesis; isopentenyl diphosphate biosynthesis via DXP pathway; isopentenyl diphosphate from 1-deoxy-D-xylulose 5-phosphate: step 6/6.</text>
</comment>
<comment type="similarity">
    <text evidence="1">Belongs to the IspH family.</text>
</comment>
<feature type="chain" id="PRO_1000098926" description="4-hydroxy-3-methylbut-2-enyl diphosphate reductase">
    <location>
        <begin position="1"/>
        <end position="316"/>
    </location>
</feature>
<feature type="active site" description="Proton donor" evidence="1">
    <location>
        <position position="126"/>
    </location>
</feature>
<feature type="binding site" evidence="1">
    <location>
        <position position="12"/>
    </location>
    <ligand>
        <name>[4Fe-4S] cluster</name>
        <dbReference type="ChEBI" id="CHEBI:49883"/>
    </ligand>
</feature>
<feature type="binding site" evidence="1">
    <location>
        <position position="41"/>
    </location>
    <ligand>
        <name>(2E)-4-hydroxy-3-methylbut-2-enyl diphosphate</name>
        <dbReference type="ChEBI" id="CHEBI:128753"/>
    </ligand>
</feature>
<feature type="binding site" evidence="1">
    <location>
        <position position="41"/>
    </location>
    <ligand>
        <name>dimethylallyl diphosphate</name>
        <dbReference type="ChEBI" id="CHEBI:57623"/>
    </ligand>
</feature>
<feature type="binding site" evidence="1">
    <location>
        <position position="41"/>
    </location>
    <ligand>
        <name>isopentenyl diphosphate</name>
        <dbReference type="ChEBI" id="CHEBI:128769"/>
    </ligand>
</feature>
<feature type="binding site" evidence="1">
    <location>
        <position position="74"/>
    </location>
    <ligand>
        <name>(2E)-4-hydroxy-3-methylbut-2-enyl diphosphate</name>
        <dbReference type="ChEBI" id="CHEBI:128753"/>
    </ligand>
</feature>
<feature type="binding site" evidence="1">
    <location>
        <position position="74"/>
    </location>
    <ligand>
        <name>dimethylallyl diphosphate</name>
        <dbReference type="ChEBI" id="CHEBI:57623"/>
    </ligand>
</feature>
<feature type="binding site" evidence="1">
    <location>
        <position position="74"/>
    </location>
    <ligand>
        <name>isopentenyl diphosphate</name>
        <dbReference type="ChEBI" id="CHEBI:128769"/>
    </ligand>
</feature>
<feature type="binding site" evidence="1">
    <location>
        <position position="96"/>
    </location>
    <ligand>
        <name>[4Fe-4S] cluster</name>
        <dbReference type="ChEBI" id="CHEBI:49883"/>
    </ligand>
</feature>
<feature type="binding site" evidence="1">
    <location>
        <position position="124"/>
    </location>
    <ligand>
        <name>(2E)-4-hydroxy-3-methylbut-2-enyl diphosphate</name>
        <dbReference type="ChEBI" id="CHEBI:128753"/>
    </ligand>
</feature>
<feature type="binding site" evidence="1">
    <location>
        <position position="124"/>
    </location>
    <ligand>
        <name>dimethylallyl diphosphate</name>
        <dbReference type="ChEBI" id="CHEBI:57623"/>
    </ligand>
</feature>
<feature type="binding site" evidence="1">
    <location>
        <position position="124"/>
    </location>
    <ligand>
        <name>isopentenyl diphosphate</name>
        <dbReference type="ChEBI" id="CHEBI:128769"/>
    </ligand>
</feature>
<feature type="binding site" evidence="1">
    <location>
        <position position="168"/>
    </location>
    <ligand>
        <name>(2E)-4-hydroxy-3-methylbut-2-enyl diphosphate</name>
        <dbReference type="ChEBI" id="CHEBI:128753"/>
    </ligand>
</feature>
<feature type="binding site" evidence="1">
    <location>
        <position position="198"/>
    </location>
    <ligand>
        <name>[4Fe-4S] cluster</name>
        <dbReference type="ChEBI" id="CHEBI:49883"/>
    </ligand>
</feature>
<feature type="binding site" evidence="1">
    <location>
        <position position="226"/>
    </location>
    <ligand>
        <name>(2E)-4-hydroxy-3-methylbut-2-enyl diphosphate</name>
        <dbReference type="ChEBI" id="CHEBI:128753"/>
    </ligand>
</feature>
<feature type="binding site" evidence="1">
    <location>
        <position position="226"/>
    </location>
    <ligand>
        <name>dimethylallyl diphosphate</name>
        <dbReference type="ChEBI" id="CHEBI:57623"/>
    </ligand>
</feature>
<feature type="binding site" evidence="1">
    <location>
        <position position="226"/>
    </location>
    <ligand>
        <name>isopentenyl diphosphate</name>
        <dbReference type="ChEBI" id="CHEBI:128769"/>
    </ligand>
</feature>
<feature type="binding site" evidence="1">
    <location>
        <position position="227"/>
    </location>
    <ligand>
        <name>(2E)-4-hydroxy-3-methylbut-2-enyl diphosphate</name>
        <dbReference type="ChEBI" id="CHEBI:128753"/>
    </ligand>
</feature>
<feature type="binding site" evidence="1">
    <location>
        <position position="227"/>
    </location>
    <ligand>
        <name>dimethylallyl diphosphate</name>
        <dbReference type="ChEBI" id="CHEBI:57623"/>
    </ligand>
</feature>
<feature type="binding site" evidence="1">
    <location>
        <position position="227"/>
    </location>
    <ligand>
        <name>isopentenyl diphosphate</name>
        <dbReference type="ChEBI" id="CHEBI:128769"/>
    </ligand>
</feature>
<feature type="binding site" evidence="1">
    <location>
        <position position="228"/>
    </location>
    <ligand>
        <name>(2E)-4-hydroxy-3-methylbut-2-enyl diphosphate</name>
        <dbReference type="ChEBI" id="CHEBI:128753"/>
    </ligand>
</feature>
<feature type="binding site" evidence="1">
    <location>
        <position position="228"/>
    </location>
    <ligand>
        <name>dimethylallyl diphosphate</name>
        <dbReference type="ChEBI" id="CHEBI:57623"/>
    </ligand>
</feature>
<feature type="binding site" evidence="1">
    <location>
        <position position="228"/>
    </location>
    <ligand>
        <name>isopentenyl diphosphate</name>
        <dbReference type="ChEBI" id="CHEBI:128769"/>
    </ligand>
</feature>
<feature type="binding site" evidence="1">
    <location>
        <position position="270"/>
    </location>
    <ligand>
        <name>(2E)-4-hydroxy-3-methylbut-2-enyl diphosphate</name>
        <dbReference type="ChEBI" id="CHEBI:128753"/>
    </ligand>
</feature>
<feature type="binding site" evidence="1">
    <location>
        <position position="270"/>
    </location>
    <ligand>
        <name>dimethylallyl diphosphate</name>
        <dbReference type="ChEBI" id="CHEBI:57623"/>
    </ligand>
</feature>
<feature type="binding site" evidence="1">
    <location>
        <position position="270"/>
    </location>
    <ligand>
        <name>isopentenyl diphosphate</name>
        <dbReference type="ChEBI" id="CHEBI:128769"/>
    </ligand>
</feature>
<reference key="1">
    <citation type="journal article" date="2008" name="PLoS ONE">
        <title>Comparative analysis of Acinetobacters: three genomes for three lifestyles.</title>
        <authorList>
            <person name="Vallenet D."/>
            <person name="Nordmann P."/>
            <person name="Barbe V."/>
            <person name="Poirel L."/>
            <person name="Mangenot S."/>
            <person name="Bataille E."/>
            <person name="Dossat C."/>
            <person name="Gas S."/>
            <person name="Kreimeyer A."/>
            <person name="Lenoble P."/>
            <person name="Oztas S."/>
            <person name="Poulain J."/>
            <person name="Segurens B."/>
            <person name="Robert C."/>
            <person name="Abergel C."/>
            <person name="Claverie J.-M."/>
            <person name="Raoult D."/>
            <person name="Medigue C."/>
            <person name="Weissenbach J."/>
            <person name="Cruveiller S."/>
        </authorList>
    </citation>
    <scope>NUCLEOTIDE SEQUENCE [LARGE SCALE GENOMIC DNA]</scope>
    <source>
        <strain>AYE</strain>
    </source>
</reference>
<sequence>MEIVLANPRGFCAGVDRAIAIVNRALECFNPPIYVRHEVVHNKFVVDDLRQRGAVFVDELDQVPDDSIVIFSAHGVSKAVQQEAERRGLKVFDATCPLVTKVHIEVTKYAREGTEAILIGHEGHPEVEGTMGQYDKLKGGDIYLVEDEADVAALEVRHPEKLAFVTQTTLSIDDTAKVIDALRAKFPNIQGPRKDDICYATQNRQDAVRDLAEKCDVVLVVGSPNSSNSNRLRELAERMGKAAYLVDNADQLEQSWFNDTCKIGVTAGASAPEILIKQVIQRLQDWGAQAPKELEGREENITFSLPKELRIHVTQA</sequence>
<name>ISPH_ACIBY</name>
<keyword id="KW-0004">4Fe-4S</keyword>
<keyword id="KW-0408">Iron</keyword>
<keyword id="KW-0411">Iron-sulfur</keyword>
<keyword id="KW-0414">Isoprene biosynthesis</keyword>
<keyword id="KW-0479">Metal-binding</keyword>
<keyword id="KW-0560">Oxidoreductase</keyword>